<gene>
    <name type="primary">prrA</name>
    <name type="ordered locus">BQ2027_MB0927C</name>
</gene>
<feature type="chain" id="PRO_0000081328" description="Transcriptional regulatory protein PrrA">
    <location>
        <begin position="1"/>
        <end position="233"/>
    </location>
</feature>
<feature type="domain" description="Response regulatory" evidence="2">
    <location>
        <begin position="9"/>
        <end position="123"/>
    </location>
</feature>
<feature type="DNA-binding region" description="OmpR/PhoB-type" evidence="3">
    <location>
        <begin position="134"/>
        <end position="232"/>
    </location>
</feature>
<feature type="modified residue" description="4-aspartylphosphate" evidence="1 2">
    <location>
        <position position="58"/>
    </location>
</feature>
<name>PRRA_MYCBO</name>
<comment type="function">
    <text evidence="1">Member of the two-component regulatory system PrrB/PrrA that is involved specifically in early intracellular multiplication of Mycobacterium and is essential for its viability. Upon phosphorylation by PrrB, functions as a transcription regulator by direct binding to promoter regions of target genes to positively regulate their expression. Autoregulates its own expression.</text>
</comment>
<comment type="subcellular location">
    <subcellularLocation>
        <location evidence="4">Cytoplasm</location>
    </subcellularLocation>
</comment>
<comment type="PTM">
    <text evidence="1">Phosphorylated by PrrB at Asp-58.</text>
</comment>
<comment type="sequence caution" evidence="4">
    <conflict type="erroneous initiation">
        <sequence resource="EMBL-CDS" id="SIT99525"/>
    </conflict>
    <text>Extended N-terminus.</text>
</comment>
<organism>
    <name type="scientific">Mycobacterium bovis (strain ATCC BAA-935 / AF2122/97)</name>
    <dbReference type="NCBI Taxonomy" id="233413"/>
    <lineage>
        <taxon>Bacteria</taxon>
        <taxon>Bacillati</taxon>
        <taxon>Actinomycetota</taxon>
        <taxon>Actinomycetes</taxon>
        <taxon>Mycobacteriales</taxon>
        <taxon>Mycobacteriaceae</taxon>
        <taxon>Mycobacterium</taxon>
        <taxon>Mycobacterium tuberculosis complex</taxon>
    </lineage>
</organism>
<evidence type="ECO:0000250" key="1">
    <source>
        <dbReference type="UniProtKB" id="P9WGM1"/>
    </source>
</evidence>
<evidence type="ECO:0000255" key="2">
    <source>
        <dbReference type="PROSITE-ProRule" id="PRU00169"/>
    </source>
</evidence>
<evidence type="ECO:0000255" key="3">
    <source>
        <dbReference type="PROSITE-ProRule" id="PRU01091"/>
    </source>
</evidence>
<evidence type="ECO:0000305" key="4"/>
<reference key="1">
    <citation type="journal article" date="2003" name="Proc. Natl. Acad. Sci. U.S.A.">
        <title>The complete genome sequence of Mycobacterium bovis.</title>
        <authorList>
            <person name="Garnier T."/>
            <person name="Eiglmeier K."/>
            <person name="Camus J.-C."/>
            <person name="Medina N."/>
            <person name="Mansoor H."/>
            <person name="Pryor M."/>
            <person name="Duthoy S."/>
            <person name="Grondin S."/>
            <person name="Lacroix C."/>
            <person name="Monsempe C."/>
            <person name="Simon S."/>
            <person name="Harris B."/>
            <person name="Atkin R."/>
            <person name="Doggett J."/>
            <person name="Mayes R."/>
            <person name="Keating L."/>
            <person name="Wheeler P.R."/>
            <person name="Parkhill J."/>
            <person name="Barrell B.G."/>
            <person name="Cole S.T."/>
            <person name="Gordon S.V."/>
            <person name="Hewinson R.G."/>
        </authorList>
    </citation>
    <scope>NUCLEOTIDE SEQUENCE [LARGE SCALE GENOMIC DNA]</scope>
    <source>
        <strain>ATCC BAA-935 / AF2122/97</strain>
    </source>
</reference>
<reference key="2">
    <citation type="journal article" date="2017" name="Genome Announc.">
        <title>Updated reference genome sequence and annotation of Mycobacterium bovis AF2122/97.</title>
        <authorList>
            <person name="Malone K.M."/>
            <person name="Farrell D."/>
            <person name="Stuber T.P."/>
            <person name="Schubert O.T."/>
            <person name="Aebersold R."/>
            <person name="Robbe-Austerman S."/>
            <person name="Gordon S.V."/>
        </authorList>
    </citation>
    <scope>NUCLEOTIDE SEQUENCE [LARGE SCALE GENOMIC DNA]</scope>
    <scope>GENOME REANNOTATION</scope>
    <source>
        <strain>ATCC BAA-935 / AF2122/97</strain>
    </source>
</reference>
<protein>
    <recommendedName>
        <fullName>Transcriptional regulatory protein PrrA</fullName>
    </recommendedName>
</protein>
<accession>P0A5Z7</accession>
<accession>A0A1R3XX52</accession>
<accession>Q10531</accession>
<accession>X2BGG9</accession>
<dbReference type="EMBL" id="LT708304">
    <property type="protein sequence ID" value="SIT99525.1"/>
    <property type="status" value="ALT_INIT"/>
    <property type="molecule type" value="Genomic_DNA"/>
</dbReference>
<dbReference type="RefSeq" id="NP_854584.1">
    <property type="nucleotide sequence ID" value="NC_002945.3"/>
</dbReference>
<dbReference type="SMR" id="P0A5Z7"/>
<dbReference type="KEGG" id="mbo:BQ2027_MB0927C"/>
<dbReference type="PATRIC" id="fig|233413.5.peg.1008"/>
<dbReference type="Proteomes" id="UP000001419">
    <property type="component" value="Chromosome"/>
</dbReference>
<dbReference type="GO" id="GO:0005829">
    <property type="term" value="C:cytosol"/>
    <property type="evidence" value="ECO:0007669"/>
    <property type="project" value="TreeGrafter"/>
</dbReference>
<dbReference type="GO" id="GO:0032993">
    <property type="term" value="C:protein-DNA complex"/>
    <property type="evidence" value="ECO:0007669"/>
    <property type="project" value="TreeGrafter"/>
</dbReference>
<dbReference type="GO" id="GO:0000156">
    <property type="term" value="F:phosphorelay response regulator activity"/>
    <property type="evidence" value="ECO:0007669"/>
    <property type="project" value="TreeGrafter"/>
</dbReference>
<dbReference type="GO" id="GO:0000976">
    <property type="term" value="F:transcription cis-regulatory region binding"/>
    <property type="evidence" value="ECO:0007669"/>
    <property type="project" value="TreeGrafter"/>
</dbReference>
<dbReference type="GO" id="GO:0006355">
    <property type="term" value="P:regulation of DNA-templated transcription"/>
    <property type="evidence" value="ECO:0007669"/>
    <property type="project" value="InterPro"/>
</dbReference>
<dbReference type="CDD" id="cd17627">
    <property type="entry name" value="REC_OmpR_PrrA-like"/>
    <property type="match status" value="1"/>
</dbReference>
<dbReference type="CDD" id="cd00383">
    <property type="entry name" value="trans_reg_C"/>
    <property type="match status" value="1"/>
</dbReference>
<dbReference type="FunFam" id="1.10.10.10:FF:000233">
    <property type="entry name" value="DNA-binding response regulator PrrA"/>
    <property type="match status" value="1"/>
</dbReference>
<dbReference type="FunFam" id="3.40.50.2300:FF:000103">
    <property type="entry name" value="DNA-binding response regulator PrrA"/>
    <property type="match status" value="1"/>
</dbReference>
<dbReference type="Gene3D" id="3.40.50.2300">
    <property type="match status" value="1"/>
</dbReference>
<dbReference type="Gene3D" id="6.10.250.690">
    <property type="match status" value="1"/>
</dbReference>
<dbReference type="Gene3D" id="1.10.10.10">
    <property type="entry name" value="Winged helix-like DNA-binding domain superfamily/Winged helix DNA-binding domain"/>
    <property type="match status" value="1"/>
</dbReference>
<dbReference type="InterPro" id="IPR011006">
    <property type="entry name" value="CheY-like_superfamily"/>
</dbReference>
<dbReference type="InterPro" id="IPR001867">
    <property type="entry name" value="OmpR/PhoB-type_DNA-bd"/>
</dbReference>
<dbReference type="InterPro" id="IPR001789">
    <property type="entry name" value="Sig_transdc_resp-reg_receiver"/>
</dbReference>
<dbReference type="InterPro" id="IPR039420">
    <property type="entry name" value="WalR-like"/>
</dbReference>
<dbReference type="InterPro" id="IPR036388">
    <property type="entry name" value="WH-like_DNA-bd_sf"/>
</dbReference>
<dbReference type="PANTHER" id="PTHR48111">
    <property type="entry name" value="REGULATOR OF RPOS"/>
    <property type="match status" value="1"/>
</dbReference>
<dbReference type="PANTHER" id="PTHR48111:SF22">
    <property type="entry name" value="REGULATOR OF RPOS"/>
    <property type="match status" value="1"/>
</dbReference>
<dbReference type="Pfam" id="PF00072">
    <property type="entry name" value="Response_reg"/>
    <property type="match status" value="1"/>
</dbReference>
<dbReference type="Pfam" id="PF00486">
    <property type="entry name" value="Trans_reg_C"/>
    <property type="match status" value="1"/>
</dbReference>
<dbReference type="SMART" id="SM00448">
    <property type="entry name" value="REC"/>
    <property type="match status" value="1"/>
</dbReference>
<dbReference type="SMART" id="SM00862">
    <property type="entry name" value="Trans_reg_C"/>
    <property type="match status" value="1"/>
</dbReference>
<dbReference type="SUPFAM" id="SSF52172">
    <property type="entry name" value="CheY-like"/>
    <property type="match status" value="1"/>
</dbReference>
<dbReference type="PROSITE" id="PS51755">
    <property type="entry name" value="OMPR_PHOB"/>
    <property type="match status" value="1"/>
</dbReference>
<dbReference type="PROSITE" id="PS50110">
    <property type="entry name" value="RESPONSE_REGULATORY"/>
    <property type="match status" value="1"/>
</dbReference>
<proteinExistence type="inferred from homology"/>
<sequence length="233" mass="25009">MDTGVTSPRVLVVDDDSDVLASLERGLRLSGFEVATAVDGAEALRSATENRPDAIVLDINMPVLDGVSVVTALRAMDNDVPVCVLSARSSVDDRVAGLEAGADDYLVKPFVLAELVARVKALLRRRGSTATSSSETITVGPLEVDIPGRRARVNGVDVDLTKREFDLLAVLAEHKTAVLSRAQLLELVWGYDFAADTNVVDVFIGYLRRKLEAGGGPRLLHTVRGVGFVLRMQ</sequence>
<keyword id="KW-0963">Cytoplasm</keyword>
<keyword id="KW-0238">DNA-binding</keyword>
<keyword id="KW-0597">Phosphoprotein</keyword>
<keyword id="KW-1185">Reference proteome</keyword>
<keyword id="KW-0804">Transcription</keyword>
<keyword id="KW-0805">Transcription regulation</keyword>
<keyword id="KW-0902">Two-component regulatory system</keyword>